<proteinExistence type="inferred from homology"/>
<accession>A1A7A6</accession>
<comment type="function">
    <text evidence="1">Transcription regulator that activates transcription by stimulating RNA polymerase (RNAP) recycling in case of stress conditions such as supercoiled DNA or high salt concentrations. Probably acts by releasing the RNAP, when it is trapped or immobilized on tightly supercoiled DNA. Does not activate transcription on linear DNA. Probably not involved in DNA repair.</text>
</comment>
<comment type="subunit">
    <text evidence="1">Interacts with the RNAP. Has a higher affinity for the core RNAP than for the holoenzyme. Its ATPase activity is stimulated by binding to RNAP.</text>
</comment>
<comment type="similarity">
    <text evidence="1">Belongs to the SNF2/RAD54 helicase family. RapA subfamily.</text>
</comment>
<evidence type="ECO:0000255" key="1">
    <source>
        <dbReference type="HAMAP-Rule" id="MF_01821"/>
    </source>
</evidence>
<reference key="1">
    <citation type="journal article" date="2007" name="J. Bacteriol.">
        <title>The genome sequence of avian pathogenic Escherichia coli strain O1:K1:H7 shares strong similarities with human extraintestinal pathogenic E. coli genomes.</title>
        <authorList>
            <person name="Johnson T.J."/>
            <person name="Kariyawasam S."/>
            <person name="Wannemuehler Y."/>
            <person name="Mangiamele P."/>
            <person name="Johnson S.J."/>
            <person name="Doetkott C."/>
            <person name="Skyberg J.A."/>
            <person name="Lynne A.M."/>
            <person name="Johnson J.R."/>
            <person name="Nolan L.K."/>
        </authorList>
    </citation>
    <scope>NUCLEOTIDE SEQUENCE [LARGE SCALE GENOMIC DNA]</scope>
</reference>
<feature type="chain" id="PRO_1000088353" description="RNA polymerase-associated protein RapA">
    <location>
        <begin position="1"/>
        <end position="968"/>
    </location>
</feature>
<feature type="domain" description="Helicase ATP-binding" evidence="1">
    <location>
        <begin position="164"/>
        <end position="334"/>
    </location>
</feature>
<feature type="domain" description="Helicase C-terminal" evidence="1">
    <location>
        <begin position="490"/>
        <end position="662"/>
    </location>
</feature>
<feature type="short sequence motif" description="DEAH box">
    <location>
        <begin position="280"/>
        <end position="283"/>
    </location>
</feature>
<feature type="binding site" evidence="1">
    <location>
        <begin position="177"/>
        <end position="184"/>
    </location>
    <ligand>
        <name>ATP</name>
        <dbReference type="ChEBI" id="CHEBI:30616"/>
    </ligand>
</feature>
<sequence>MPFTLGQRWISDTESELGLGTVVAVDARTVTLLFPSTGENRLYARSDSPVTRVMFNPGDTITSHDGWQMQVEEVKEENGLLTYIGTRLDTEESGVALREVFLDSKLVFSKPQDRLFAGQIDRMDRFALRYRARKYSSEQFRMPYSGLRGQRTSLIPHQLNIAHDVGRRHAPRVLLADEVGLGKTIEAGMILHQQLLSGAAERVLIIVPETLQHQWLVEMLRRFNLRFALFDDERYAEAQHDAYNPFDTEQLVICSLDFARRSKQRLEHLCEAEWDLLVVDEAHHLVWSEDAPSREYQAIEQLAEHVPGVLLLTATPEQLGMESHFARLRLLDPNRFHDFAQFVEEQKNYRPVADAVAMLLAGNKLSNDELNMLGEMIGEQDIEPLLQAANSDSEDAQSARQELVSMLMDRHGTSRVLFRNTRNGVKGFPKRELHTIKLPLPTQYQTAIKVSGIMGARKSAEDRARDMLYPERIYQEFEGDNATWWNFDPRVEWLMGYLTSHRSQKVLVICAKAATALQLEQVLREREGIRAAVFHEGMSIIERDRAAAWFAEEDTGAQVLLCSEIGSEGRNFQFASHMVMFDLPFNPDLLEQRIGRLDRIGQAHDIQIHVPYLEKTAQSVLVRWYHEGLDAFEHTCPTGRTIYDSVYNDLINYLASPDQTEGFDDLIKNCREQHEALKAQLEQGRDRLLEIHSNGGEKAQALAESIEEQDDDTNLIAFAMNLFDIIGINQDDRGDNMIVLTPSDHMLVPDFPGLSEDGITITFDREVALAREDTQFITWEHPLIRNGLDLILSGDTGSSTISLLKNKALPVGTLLVELIYVVEAQAPKQLQLNRFLPPTPVRMLLDKNGNNLAAQVEFETFNRQLNAVNRHTGSKLVNAVQQDVHAILQLGEAQIEKSARALIDAARNEADEKLSAELSRLEALRAVNPNIRDDELTAIESNRQQVMESLDQAGWRLDALRLIVVTHQ</sequence>
<gene>
    <name evidence="1" type="primary">rapA</name>
    <name type="ordered locus">Ecok1_00520</name>
    <name type="ORF">APECO1_1925</name>
</gene>
<keyword id="KW-0010">Activator</keyword>
<keyword id="KW-0067">ATP-binding</keyword>
<keyword id="KW-0238">DNA-binding</keyword>
<keyword id="KW-0347">Helicase</keyword>
<keyword id="KW-0378">Hydrolase</keyword>
<keyword id="KW-0547">Nucleotide-binding</keyword>
<keyword id="KW-1185">Reference proteome</keyword>
<keyword id="KW-0804">Transcription</keyword>
<keyword id="KW-0805">Transcription regulation</keyword>
<name>RAPA_ECOK1</name>
<organism>
    <name type="scientific">Escherichia coli O1:K1 / APEC</name>
    <dbReference type="NCBI Taxonomy" id="405955"/>
    <lineage>
        <taxon>Bacteria</taxon>
        <taxon>Pseudomonadati</taxon>
        <taxon>Pseudomonadota</taxon>
        <taxon>Gammaproteobacteria</taxon>
        <taxon>Enterobacterales</taxon>
        <taxon>Enterobacteriaceae</taxon>
        <taxon>Escherichia</taxon>
    </lineage>
</organism>
<protein>
    <recommendedName>
        <fullName evidence="1">RNA polymerase-associated protein RapA</fullName>
        <ecNumber evidence="1">3.6.4.-</ecNumber>
    </recommendedName>
    <alternativeName>
        <fullName evidence="1">ATP-dependent helicase HepA</fullName>
    </alternativeName>
</protein>
<dbReference type="EC" id="3.6.4.-" evidence="1"/>
<dbReference type="EMBL" id="CP000468">
    <property type="protein sequence ID" value="ABI99545.1"/>
    <property type="molecule type" value="Genomic_DNA"/>
</dbReference>
<dbReference type="RefSeq" id="WP_001117017.1">
    <property type="nucleotide sequence ID" value="NC_008563.1"/>
</dbReference>
<dbReference type="SMR" id="A1A7A6"/>
<dbReference type="KEGG" id="ecv:APECO1_1925"/>
<dbReference type="HOGENOM" id="CLU_011520_0_0_6"/>
<dbReference type="Proteomes" id="UP000008216">
    <property type="component" value="Chromosome"/>
</dbReference>
<dbReference type="GO" id="GO:0005524">
    <property type="term" value="F:ATP binding"/>
    <property type="evidence" value="ECO:0007669"/>
    <property type="project" value="UniProtKB-UniRule"/>
</dbReference>
<dbReference type="GO" id="GO:0003677">
    <property type="term" value="F:DNA binding"/>
    <property type="evidence" value="ECO:0007669"/>
    <property type="project" value="UniProtKB-KW"/>
</dbReference>
<dbReference type="GO" id="GO:0004386">
    <property type="term" value="F:helicase activity"/>
    <property type="evidence" value="ECO:0007669"/>
    <property type="project" value="UniProtKB-UniRule"/>
</dbReference>
<dbReference type="GO" id="GO:0016817">
    <property type="term" value="F:hydrolase activity, acting on acid anhydrides"/>
    <property type="evidence" value="ECO:0007669"/>
    <property type="project" value="InterPro"/>
</dbReference>
<dbReference type="GO" id="GO:0006355">
    <property type="term" value="P:regulation of DNA-templated transcription"/>
    <property type="evidence" value="ECO:0007669"/>
    <property type="project" value="UniProtKB-UniRule"/>
</dbReference>
<dbReference type="CDD" id="cd18011">
    <property type="entry name" value="DEXDc_RapA"/>
    <property type="match status" value="1"/>
</dbReference>
<dbReference type="CDD" id="cd18793">
    <property type="entry name" value="SF2_C_SNF"/>
    <property type="match status" value="1"/>
</dbReference>
<dbReference type="FunFam" id="2.30.30.140:FF:000020">
    <property type="entry name" value="RNA polymerase-associated protein RapA"/>
    <property type="match status" value="1"/>
</dbReference>
<dbReference type="FunFam" id="2.30.30.930:FF:000001">
    <property type="entry name" value="RNA polymerase-associated protein RapA"/>
    <property type="match status" value="1"/>
</dbReference>
<dbReference type="FunFam" id="3.30.360.80:FF:000001">
    <property type="entry name" value="RNA polymerase-associated protein RapA"/>
    <property type="match status" value="1"/>
</dbReference>
<dbReference type="FunFam" id="3.40.50.10810:FF:000012">
    <property type="entry name" value="RNA polymerase-associated protein RapA"/>
    <property type="match status" value="1"/>
</dbReference>
<dbReference type="FunFam" id="3.40.50.300:FF:000350">
    <property type="entry name" value="RNA polymerase-associated protein RapA"/>
    <property type="match status" value="1"/>
</dbReference>
<dbReference type="Gene3D" id="2.30.30.140">
    <property type="match status" value="1"/>
</dbReference>
<dbReference type="Gene3D" id="2.30.30.930">
    <property type="match status" value="1"/>
</dbReference>
<dbReference type="Gene3D" id="3.30.360.80">
    <property type="match status" value="1"/>
</dbReference>
<dbReference type="Gene3D" id="6.10.140.1500">
    <property type="match status" value="1"/>
</dbReference>
<dbReference type="Gene3D" id="6.10.140.2230">
    <property type="match status" value="1"/>
</dbReference>
<dbReference type="Gene3D" id="3.40.50.300">
    <property type="entry name" value="P-loop containing nucleotide triphosphate hydrolases"/>
    <property type="match status" value="1"/>
</dbReference>
<dbReference type="Gene3D" id="3.40.50.10810">
    <property type="entry name" value="Tandem AAA-ATPase domain"/>
    <property type="match status" value="1"/>
</dbReference>
<dbReference type="HAMAP" id="MF_01821">
    <property type="entry name" value="Helicase_RapA"/>
    <property type="match status" value="1"/>
</dbReference>
<dbReference type="InterPro" id="IPR014001">
    <property type="entry name" value="Helicase_ATP-bd"/>
</dbReference>
<dbReference type="InterPro" id="IPR001650">
    <property type="entry name" value="Helicase_C-like"/>
</dbReference>
<dbReference type="InterPro" id="IPR023949">
    <property type="entry name" value="Helicase_RapA"/>
</dbReference>
<dbReference type="InterPro" id="IPR027417">
    <property type="entry name" value="P-loop_NTPase"/>
</dbReference>
<dbReference type="InterPro" id="IPR022737">
    <property type="entry name" value="RapA_C"/>
</dbReference>
<dbReference type="InterPro" id="IPR038718">
    <property type="entry name" value="SNF2-like_sf"/>
</dbReference>
<dbReference type="InterPro" id="IPR049730">
    <property type="entry name" value="SNF2/RAD54-like_C"/>
</dbReference>
<dbReference type="InterPro" id="IPR000330">
    <property type="entry name" value="SNF2_N"/>
</dbReference>
<dbReference type="InterPro" id="IPR040765">
    <property type="entry name" value="Tudor_1_RapA"/>
</dbReference>
<dbReference type="InterPro" id="IPR040766">
    <property type="entry name" value="Tudor_2_RapA"/>
</dbReference>
<dbReference type="NCBIfam" id="NF003426">
    <property type="entry name" value="PRK04914.1"/>
    <property type="match status" value="1"/>
</dbReference>
<dbReference type="PANTHER" id="PTHR45766">
    <property type="entry name" value="DNA ANNEALING HELICASE AND ENDONUCLEASE ZRANB3 FAMILY MEMBER"/>
    <property type="match status" value="1"/>
</dbReference>
<dbReference type="PANTHER" id="PTHR45766:SF6">
    <property type="entry name" value="SWI_SNF-RELATED MATRIX-ASSOCIATED ACTIN-DEPENDENT REGULATOR OF CHROMATIN SUBFAMILY A-LIKE PROTEIN 1"/>
    <property type="match status" value="1"/>
</dbReference>
<dbReference type="Pfam" id="PF00271">
    <property type="entry name" value="Helicase_C"/>
    <property type="match status" value="1"/>
</dbReference>
<dbReference type="Pfam" id="PF12137">
    <property type="entry name" value="RapA_C"/>
    <property type="match status" value="1"/>
</dbReference>
<dbReference type="Pfam" id="PF00176">
    <property type="entry name" value="SNF2-rel_dom"/>
    <property type="match status" value="1"/>
</dbReference>
<dbReference type="Pfam" id="PF18339">
    <property type="entry name" value="Tudor_1_RapA"/>
    <property type="match status" value="1"/>
</dbReference>
<dbReference type="Pfam" id="PF18337">
    <property type="entry name" value="Tudor_RapA"/>
    <property type="match status" value="1"/>
</dbReference>
<dbReference type="SMART" id="SM00487">
    <property type="entry name" value="DEXDc"/>
    <property type="match status" value="1"/>
</dbReference>
<dbReference type="SMART" id="SM00490">
    <property type="entry name" value="HELICc"/>
    <property type="match status" value="1"/>
</dbReference>
<dbReference type="SUPFAM" id="SSF52540">
    <property type="entry name" value="P-loop containing nucleoside triphosphate hydrolases"/>
    <property type="match status" value="2"/>
</dbReference>
<dbReference type="PROSITE" id="PS51192">
    <property type="entry name" value="HELICASE_ATP_BIND_1"/>
    <property type="match status" value="1"/>
</dbReference>
<dbReference type="PROSITE" id="PS51194">
    <property type="entry name" value="HELICASE_CTER"/>
    <property type="match status" value="1"/>
</dbReference>